<name>PSBT_OSTTA</name>
<accession>Q0P3P9</accession>
<dbReference type="EMBL" id="CR954199">
    <property type="protein sequence ID" value="CAL36328.1"/>
    <property type="molecule type" value="Genomic_DNA"/>
</dbReference>
<dbReference type="RefSeq" id="YP_717206.1">
    <property type="nucleotide sequence ID" value="NC_008289.1"/>
</dbReference>
<dbReference type="SMR" id="Q0P3P9"/>
<dbReference type="FunCoup" id="Q0P3P9">
    <property type="interactions" value="32"/>
</dbReference>
<dbReference type="STRING" id="70448.Q0P3P9"/>
<dbReference type="GeneID" id="4238784"/>
<dbReference type="KEGG" id="ota:OstapCp03"/>
<dbReference type="eggNOG" id="ENOG502SCPW">
    <property type="taxonomic scope" value="Eukaryota"/>
</dbReference>
<dbReference type="InParanoid" id="Q0P3P9"/>
<dbReference type="Proteomes" id="UP000009170">
    <property type="component" value="Chloroplast"/>
</dbReference>
<dbReference type="GO" id="GO:0009535">
    <property type="term" value="C:chloroplast thylakoid membrane"/>
    <property type="evidence" value="ECO:0007669"/>
    <property type="project" value="UniProtKB-SubCell"/>
</dbReference>
<dbReference type="GO" id="GO:0009539">
    <property type="term" value="C:photosystem II reaction center"/>
    <property type="evidence" value="ECO:0007669"/>
    <property type="project" value="InterPro"/>
</dbReference>
<dbReference type="GO" id="GO:0015979">
    <property type="term" value="P:photosynthesis"/>
    <property type="evidence" value="ECO:0007669"/>
    <property type="project" value="UniProtKB-UniRule"/>
</dbReference>
<dbReference type="HAMAP" id="MF_00808">
    <property type="entry name" value="PSII_PsbT"/>
    <property type="match status" value="1"/>
</dbReference>
<dbReference type="InterPro" id="IPR001743">
    <property type="entry name" value="PSII_PsbT"/>
</dbReference>
<dbReference type="InterPro" id="IPR037268">
    <property type="entry name" value="PSII_PsbT_sf"/>
</dbReference>
<dbReference type="PANTHER" id="PTHR36411">
    <property type="match status" value="1"/>
</dbReference>
<dbReference type="PANTHER" id="PTHR36411:SF2">
    <property type="entry name" value="PHOTOSYSTEM II REACTION CENTER PROTEIN T"/>
    <property type="match status" value="1"/>
</dbReference>
<dbReference type="Pfam" id="PF01405">
    <property type="entry name" value="PsbT"/>
    <property type="match status" value="1"/>
</dbReference>
<dbReference type="SUPFAM" id="SSF161029">
    <property type="entry name" value="Photosystem II reaction center protein T, PsbT"/>
    <property type="match status" value="1"/>
</dbReference>
<proteinExistence type="inferred from homology"/>
<feature type="chain" id="PRO_0000276305" description="Photosystem II reaction center protein T">
    <location>
        <begin position="1"/>
        <end position="31"/>
    </location>
</feature>
<feature type="transmembrane region" description="Helical" evidence="1">
    <location>
        <begin position="3"/>
        <end position="23"/>
    </location>
</feature>
<evidence type="ECO:0000255" key="1">
    <source>
        <dbReference type="HAMAP-Rule" id="MF_00808"/>
    </source>
</evidence>
<comment type="function">
    <text evidence="1">Found at the monomer-monomer interface of the photosystem II (PS II) dimer, plays a role in assembly and dimerization of PSII. PSII is a light-driven water plastoquinone oxidoreductase, using light energy to abstract electrons from H(2)O, generating a proton gradient subsequently used for ATP formation.</text>
</comment>
<comment type="subunit">
    <text evidence="1">PSII is composed of 1 copy each of membrane proteins PsbA, PsbB, PsbC, PsbD, PsbE, PsbF, PsbH, PsbI, PsbJ, PsbK, PsbL, PsbM, PsbT, PsbY, PsbZ, Psb30/Ycf12, at least 3 peripheral proteins of the oxygen-evolving complex and a large number of cofactors. It forms dimeric complexes.</text>
</comment>
<comment type="subcellular location">
    <subcellularLocation>
        <location evidence="1">Plastid</location>
        <location evidence="1">Chloroplast thylakoid membrane</location>
        <topology evidence="1">Single-pass membrane protein</topology>
    </subcellularLocation>
</comment>
<comment type="similarity">
    <text evidence="1">Belongs to the PsbT family.</text>
</comment>
<gene>
    <name evidence="1" type="primary">psbT</name>
    <name type="ordered locus">OtCpg00030</name>
</gene>
<keyword id="KW-0150">Chloroplast</keyword>
<keyword id="KW-0472">Membrane</keyword>
<keyword id="KW-0602">Photosynthesis</keyword>
<keyword id="KW-0604">Photosystem II</keyword>
<keyword id="KW-0934">Plastid</keyword>
<keyword id="KW-1185">Reference proteome</keyword>
<keyword id="KW-0793">Thylakoid</keyword>
<keyword id="KW-0812">Transmembrane</keyword>
<keyword id="KW-1133">Transmembrane helix</keyword>
<reference key="1">
    <citation type="journal article" date="2007" name="Mol. Biol. Evol.">
        <title>The complete chloroplast and mitochondrial DNA sequence of Ostreococcus tauri: organelle genomes of the smallest eukaryote are examples of compaction.</title>
        <authorList>
            <person name="Robbens S."/>
            <person name="Derelle E."/>
            <person name="Ferraz C."/>
            <person name="Wuyts J."/>
            <person name="Moreau H."/>
            <person name="Van de Peer Y."/>
        </authorList>
    </citation>
    <scope>NUCLEOTIDE SEQUENCE [LARGE SCALE GENOMIC DNA]</scope>
    <source>
        <strain>OTTH0595</strain>
    </source>
</reference>
<sequence length="31" mass="3574">MEAIVYTFLLVGTLGIIFFAIFFREPPRIAK</sequence>
<organism>
    <name type="scientific">Ostreococcus tauri</name>
    <dbReference type="NCBI Taxonomy" id="70448"/>
    <lineage>
        <taxon>Eukaryota</taxon>
        <taxon>Viridiplantae</taxon>
        <taxon>Chlorophyta</taxon>
        <taxon>Mamiellophyceae</taxon>
        <taxon>Mamiellales</taxon>
        <taxon>Bathycoccaceae</taxon>
        <taxon>Ostreococcus</taxon>
    </lineage>
</organism>
<geneLocation type="chloroplast"/>
<protein>
    <recommendedName>
        <fullName evidence="1">Photosystem II reaction center protein T</fullName>
        <shortName evidence="1">PSII-T</shortName>
    </recommendedName>
</protein>